<sequence length="341" mass="38827">MKVKDFDFYLPEELIAQHPMEKRDEARLLVLDKETGEIEHKIFKDILDYLTPNDCLVLNNTRVLPARLIGSKEETGGKMEFLLLKRKEKDVWETLVKPGKRAQIGARFIFGNGELEAEVIGMGEEGSRIVKFYYEGIFEEILDQLGQMPLPPYIKEKLDDKEMYQTVYSKEEGSAAAPTAGLHFTEELLKKIEEKGVKLAFLTLHVGLGTFRPVKVEDIQEHVMHSEYYKMDKKTAEIINDTKENGGRVIAVGTTSCRTLETIGDIEGKVGEQSGWTDIFIYPGYKYKVVDALITNFHLPQSTLLMLVSALAGRDNIMNAYNVAVEKEYRFFSFGDAMFIK</sequence>
<proteinExistence type="inferred from homology"/>
<organism>
    <name type="scientific">Clostridium botulinum (strain Langeland / NCTC 10281 / Type F)</name>
    <dbReference type="NCBI Taxonomy" id="441772"/>
    <lineage>
        <taxon>Bacteria</taxon>
        <taxon>Bacillati</taxon>
        <taxon>Bacillota</taxon>
        <taxon>Clostridia</taxon>
        <taxon>Eubacteriales</taxon>
        <taxon>Clostridiaceae</taxon>
        <taxon>Clostridium</taxon>
    </lineage>
</organism>
<protein>
    <recommendedName>
        <fullName evidence="1">S-adenosylmethionine:tRNA ribosyltransferase-isomerase</fullName>
        <ecNumber evidence="1">2.4.99.17</ecNumber>
    </recommendedName>
    <alternativeName>
        <fullName evidence="1">Queuosine biosynthesis protein QueA</fullName>
    </alternativeName>
</protein>
<reference key="1">
    <citation type="submission" date="2007-06" db="EMBL/GenBank/DDBJ databases">
        <authorList>
            <person name="Brinkac L.M."/>
            <person name="Daugherty S."/>
            <person name="Dodson R.J."/>
            <person name="Madupu R."/>
            <person name="Brown J.L."/>
            <person name="Bruce D."/>
            <person name="Detter C."/>
            <person name="Munk C."/>
            <person name="Smith L.A."/>
            <person name="Smith T.J."/>
            <person name="White O."/>
            <person name="Brettin T.S."/>
        </authorList>
    </citation>
    <scope>NUCLEOTIDE SEQUENCE [LARGE SCALE GENOMIC DNA]</scope>
    <source>
        <strain>Langeland / NCTC 10281 / Type F</strain>
    </source>
</reference>
<accession>A7GHT7</accession>
<name>QUEA_CLOBL</name>
<dbReference type="EC" id="2.4.99.17" evidence="1"/>
<dbReference type="EMBL" id="CP000728">
    <property type="protein sequence ID" value="ABS41475.1"/>
    <property type="molecule type" value="Genomic_DNA"/>
</dbReference>
<dbReference type="RefSeq" id="WP_012100794.1">
    <property type="nucleotide sequence ID" value="NC_009699.1"/>
</dbReference>
<dbReference type="SMR" id="A7GHT7"/>
<dbReference type="KEGG" id="cbf:CLI_3128"/>
<dbReference type="HOGENOM" id="CLU_039110_1_0_9"/>
<dbReference type="UniPathway" id="UPA00392"/>
<dbReference type="Proteomes" id="UP000002410">
    <property type="component" value="Chromosome"/>
</dbReference>
<dbReference type="GO" id="GO:0005737">
    <property type="term" value="C:cytoplasm"/>
    <property type="evidence" value="ECO:0007669"/>
    <property type="project" value="UniProtKB-SubCell"/>
</dbReference>
<dbReference type="GO" id="GO:0051075">
    <property type="term" value="F:S-adenosylmethionine:tRNA ribosyltransferase-isomerase activity"/>
    <property type="evidence" value="ECO:0007669"/>
    <property type="project" value="UniProtKB-EC"/>
</dbReference>
<dbReference type="GO" id="GO:0008616">
    <property type="term" value="P:queuosine biosynthetic process"/>
    <property type="evidence" value="ECO:0007669"/>
    <property type="project" value="UniProtKB-UniRule"/>
</dbReference>
<dbReference type="GO" id="GO:0002099">
    <property type="term" value="P:tRNA wobble guanine modification"/>
    <property type="evidence" value="ECO:0007669"/>
    <property type="project" value="TreeGrafter"/>
</dbReference>
<dbReference type="FunFam" id="2.40.10.240:FF:000002">
    <property type="entry name" value="S-adenosylmethionine:tRNA ribosyltransferase-isomerase"/>
    <property type="match status" value="1"/>
</dbReference>
<dbReference type="FunFam" id="3.40.1780.10:FF:000001">
    <property type="entry name" value="S-adenosylmethionine:tRNA ribosyltransferase-isomerase"/>
    <property type="match status" value="1"/>
</dbReference>
<dbReference type="Gene3D" id="2.40.10.240">
    <property type="entry name" value="QueA-like"/>
    <property type="match status" value="1"/>
</dbReference>
<dbReference type="Gene3D" id="3.40.1780.10">
    <property type="entry name" value="QueA-like"/>
    <property type="match status" value="1"/>
</dbReference>
<dbReference type="HAMAP" id="MF_00113">
    <property type="entry name" value="QueA"/>
    <property type="match status" value="1"/>
</dbReference>
<dbReference type="InterPro" id="IPR003699">
    <property type="entry name" value="QueA"/>
</dbReference>
<dbReference type="InterPro" id="IPR042118">
    <property type="entry name" value="QueA_dom1"/>
</dbReference>
<dbReference type="InterPro" id="IPR042119">
    <property type="entry name" value="QueA_dom2"/>
</dbReference>
<dbReference type="InterPro" id="IPR036100">
    <property type="entry name" value="QueA_sf"/>
</dbReference>
<dbReference type="NCBIfam" id="NF001140">
    <property type="entry name" value="PRK00147.1"/>
    <property type="match status" value="1"/>
</dbReference>
<dbReference type="NCBIfam" id="TIGR00113">
    <property type="entry name" value="queA"/>
    <property type="match status" value="1"/>
</dbReference>
<dbReference type="PANTHER" id="PTHR30307">
    <property type="entry name" value="S-ADENOSYLMETHIONINE:TRNA RIBOSYLTRANSFERASE-ISOMERASE"/>
    <property type="match status" value="1"/>
</dbReference>
<dbReference type="PANTHER" id="PTHR30307:SF0">
    <property type="entry name" value="S-ADENOSYLMETHIONINE:TRNA RIBOSYLTRANSFERASE-ISOMERASE"/>
    <property type="match status" value="1"/>
</dbReference>
<dbReference type="Pfam" id="PF02547">
    <property type="entry name" value="Queuosine_synth"/>
    <property type="match status" value="1"/>
</dbReference>
<dbReference type="SUPFAM" id="SSF111337">
    <property type="entry name" value="QueA-like"/>
    <property type="match status" value="1"/>
</dbReference>
<keyword id="KW-0963">Cytoplasm</keyword>
<keyword id="KW-0671">Queuosine biosynthesis</keyword>
<keyword id="KW-0949">S-adenosyl-L-methionine</keyword>
<keyword id="KW-0808">Transferase</keyword>
<evidence type="ECO:0000255" key="1">
    <source>
        <dbReference type="HAMAP-Rule" id="MF_00113"/>
    </source>
</evidence>
<comment type="function">
    <text evidence="1">Transfers and isomerizes the ribose moiety from AdoMet to the 7-aminomethyl group of 7-deazaguanine (preQ1-tRNA) to give epoxyqueuosine (oQ-tRNA).</text>
</comment>
<comment type="catalytic activity">
    <reaction evidence="1">
        <text>7-aminomethyl-7-carbaguanosine(34) in tRNA + S-adenosyl-L-methionine = epoxyqueuosine(34) in tRNA + adenine + L-methionine + 2 H(+)</text>
        <dbReference type="Rhea" id="RHEA:32155"/>
        <dbReference type="Rhea" id="RHEA-COMP:10342"/>
        <dbReference type="Rhea" id="RHEA-COMP:18582"/>
        <dbReference type="ChEBI" id="CHEBI:15378"/>
        <dbReference type="ChEBI" id="CHEBI:16708"/>
        <dbReference type="ChEBI" id="CHEBI:57844"/>
        <dbReference type="ChEBI" id="CHEBI:59789"/>
        <dbReference type="ChEBI" id="CHEBI:82833"/>
        <dbReference type="ChEBI" id="CHEBI:194443"/>
        <dbReference type="EC" id="2.4.99.17"/>
    </reaction>
</comment>
<comment type="pathway">
    <text evidence="1">tRNA modification; tRNA-queuosine biosynthesis.</text>
</comment>
<comment type="subunit">
    <text evidence="1">Monomer.</text>
</comment>
<comment type="subcellular location">
    <subcellularLocation>
        <location evidence="1">Cytoplasm</location>
    </subcellularLocation>
</comment>
<comment type="similarity">
    <text evidence="1">Belongs to the QueA family.</text>
</comment>
<feature type="chain" id="PRO_1000015200" description="S-adenosylmethionine:tRNA ribosyltransferase-isomerase">
    <location>
        <begin position="1"/>
        <end position="341"/>
    </location>
</feature>
<gene>
    <name evidence="1" type="primary">queA</name>
    <name type="ordered locus">CLI_3128</name>
</gene>